<name>UBIE_ECO57</name>
<protein>
    <recommendedName>
        <fullName evidence="1">Ubiquinone/menaquinone biosynthesis C-methyltransferase UbiE</fullName>
        <ecNumber evidence="1">2.1.1.163</ecNumber>
        <ecNumber evidence="1">2.1.1.201</ecNumber>
    </recommendedName>
    <alternativeName>
        <fullName evidence="1">2-methoxy-6-polyprenyl-1,4-benzoquinol methylase</fullName>
    </alternativeName>
    <alternativeName>
        <fullName evidence="1">Demethylmenaquinone methyltransferase</fullName>
    </alternativeName>
</protein>
<sequence>MVDKSQETTHFGFQTVAKEQKADMVAHVFHSVASKYDVMNDLMSFGIHRLWKRFTIDCSGVRRGQTVLDLAGGTGDLTAKFSRLVGETGKVVLADINESMLKMGREKLRNIGVIGNVEYVQANAEALPFPDNTFDCITISFGLRNVTDKDKALRSMYRVLKPGGRLLVLEFSKPIIEPLSKAYDAYSFHVLPRIGSLVANDADSYRYLAESIRMHPDQDTLKAMMQDAGFESVDYYNLTAGVVALHRGYKF</sequence>
<accession>P0A888</accession>
<accession>P27851</accession>
<evidence type="ECO:0000255" key="1">
    <source>
        <dbReference type="HAMAP-Rule" id="MF_01813"/>
    </source>
</evidence>
<dbReference type="EC" id="2.1.1.163" evidence="1"/>
<dbReference type="EC" id="2.1.1.201" evidence="1"/>
<dbReference type="EMBL" id="AE005174">
    <property type="protein sequence ID" value="AAG59029.1"/>
    <property type="molecule type" value="Genomic_DNA"/>
</dbReference>
<dbReference type="EMBL" id="BA000007">
    <property type="protein sequence ID" value="BAB38186.1"/>
    <property type="molecule type" value="Genomic_DNA"/>
</dbReference>
<dbReference type="PIR" id="A86071">
    <property type="entry name" value="A86071"/>
</dbReference>
<dbReference type="PIR" id="C98224">
    <property type="entry name" value="C98224"/>
</dbReference>
<dbReference type="RefSeq" id="NP_312790.1">
    <property type="nucleotide sequence ID" value="NC_002695.1"/>
</dbReference>
<dbReference type="RefSeq" id="WP_000227958.1">
    <property type="nucleotide sequence ID" value="NZ_VOAI01000017.1"/>
</dbReference>
<dbReference type="SMR" id="P0A888"/>
<dbReference type="STRING" id="155864.Z5355"/>
<dbReference type="GeneID" id="915141"/>
<dbReference type="GeneID" id="93778102"/>
<dbReference type="KEGG" id="ece:Z5355"/>
<dbReference type="KEGG" id="ecs:ECs_4763"/>
<dbReference type="PATRIC" id="fig|386585.9.peg.4972"/>
<dbReference type="eggNOG" id="COG2226">
    <property type="taxonomic scope" value="Bacteria"/>
</dbReference>
<dbReference type="HOGENOM" id="CLU_037990_0_0_6"/>
<dbReference type="OMA" id="MNDVMSM"/>
<dbReference type="UniPathway" id="UPA00079">
    <property type="reaction ID" value="UER00169"/>
</dbReference>
<dbReference type="UniPathway" id="UPA00232"/>
<dbReference type="Proteomes" id="UP000000558">
    <property type="component" value="Chromosome"/>
</dbReference>
<dbReference type="Proteomes" id="UP000002519">
    <property type="component" value="Chromosome"/>
</dbReference>
<dbReference type="GO" id="GO:0008425">
    <property type="term" value="F:2-methoxy-6-polyprenyl-1,4-benzoquinol methyltransferase activity"/>
    <property type="evidence" value="ECO:0007669"/>
    <property type="project" value="UniProtKB-UniRule"/>
</dbReference>
<dbReference type="GO" id="GO:0043770">
    <property type="term" value="F:demethylmenaquinone methyltransferase activity"/>
    <property type="evidence" value="ECO:0007669"/>
    <property type="project" value="UniProtKB-UniRule"/>
</dbReference>
<dbReference type="GO" id="GO:0009060">
    <property type="term" value="P:aerobic respiration"/>
    <property type="evidence" value="ECO:0007669"/>
    <property type="project" value="UniProtKB-UniRule"/>
</dbReference>
<dbReference type="GO" id="GO:0009234">
    <property type="term" value="P:menaquinone biosynthetic process"/>
    <property type="evidence" value="ECO:0007669"/>
    <property type="project" value="UniProtKB-UniRule"/>
</dbReference>
<dbReference type="GO" id="GO:0032259">
    <property type="term" value="P:methylation"/>
    <property type="evidence" value="ECO:0007669"/>
    <property type="project" value="UniProtKB-KW"/>
</dbReference>
<dbReference type="CDD" id="cd02440">
    <property type="entry name" value="AdoMet_MTases"/>
    <property type="match status" value="1"/>
</dbReference>
<dbReference type="FunFam" id="3.40.50.150:FF:000014">
    <property type="entry name" value="Ubiquinone/menaquinone biosynthesis C-methyltransferase UbiE"/>
    <property type="match status" value="1"/>
</dbReference>
<dbReference type="Gene3D" id="3.40.50.150">
    <property type="entry name" value="Vaccinia Virus protein VP39"/>
    <property type="match status" value="1"/>
</dbReference>
<dbReference type="HAMAP" id="MF_01813">
    <property type="entry name" value="MenG_UbiE_methyltr"/>
    <property type="match status" value="1"/>
</dbReference>
<dbReference type="InterPro" id="IPR029063">
    <property type="entry name" value="SAM-dependent_MTases_sf"/>
</dbReference>
<dbReference type="InterPro" id="IPR004033">
    <property type="entry name" value="UbiE/COQ5_MeTrFase"/>
</dbReference>
<dbReference type="InterPro" id="IPR023576">
    <property type="entry name" value="UbiE/COQ5_MeTrFase_CS"/>
</dbReference>
<dbReference type="NCBIfam" id="TIGR01934">
    <property type="entry name" value="MenG_MenH_UbiE"/>
    <property type="match status" value="1"/>
</dbReference>
<dbReference type="NCBIfam" id="NF001240">
    <property type="entry name" value="PRK00216.1-1"/>
    <property type="match status" value="1"/>
</dbReference>
<dbReference type="NCBIfam" id="NF001242">
    <property type="entry name" value="PRK00216.1-3"/>
    <property type="match status" value="1"/>
</dbReference>
<dbReference type="NCBIfam" id="NF001244">
    <property type="entry name" value="PRK00216.1-5"/>
    <property type="match status" value="1"/>
</dbReference>
<dbReference type="PANTHER" id="PTHR43591:SF24">
    <property type="entry name" value="2-METHOXY-6-POLYPRENYL-1,4-BENZOQUINOL METHYLASE, MITOCHONDRIAL"/>
    <property type="match status" value="1"/>
</dbReference>
<dbReference type="PANTHER" id="PTHR43591">
    <property type="entry name" value="METHYLTRANSFERASE"/>
    <property type="match status" value="1"/>
</dbReference>
<dbReference type="Pfam" id="PF01209">
    <property type="entry name" value="Ubie_methyltran"/>
    <property type="match status" value="1"/>
</dbReference>
<dbReference type="SUPFAM" id="SSF53335">
    <property type="entry name" value="S-adenosyl-L-methionine-dependent methyltransferases"/>
    <property type="match status" value="1"/>
</dbReference>
<dbReference type="PROSITE" id="PS51608">
    <property type="entry name" value="SAM_MT_UBIE"/>
    <property type="match status" value="1"/>
</dbReference>
<dbReference type="PROSITE" id="PS01183">
    <property type="entry name" value="UBIE_1"/>
    <property type="match status" value="1"/>
</dbReference>
<dbReference type="PROSITE" id="PS01184">
    <property type="entry name" value="UBIE_2"/>
    <property type="match status" value="1"/>
</dbReference>
<feature type="chain" id="PRO_0000193275" description="Ubiquinone/menaquinone biosynthesis C-methyltransferase UbiE">
    <location>
        <begin position="1"/>
        <end position="251"/>
    </location>
</feature>
<feature type="binding site" evidence="1">
    <location>
        <position position="74"/>
    </location>
    <ligand>
        <name>S-adenosyl-L-methionine</name>
        <dbReference type="ChEBI" id="CHEBI:59789"/>
    </ligand>
</feature>
<feature type="binding site" evidence="1">
    <location>
        <position position="95"/>
    </location>
    <ligand>
        <name>S-adenosyl-L-methionine</name>
        <dbReference type="ChEBI" id="CHEBI:59789"/>
    </ligand>
</feature>
<feature type="binding site" evidence="1">
    <location>
        <begin position="123"/>
        <end position="124"/>
    </location>
    <ligand>
        <name>S-adenosyl-L-methionine</name>
        <dbReference type="ChEBI" id="CHEBI:59789"/>
    </ligand>
</feature>
<feature type="binding site" evidence="1">
    <location>
        <position position="140"/>
    </location>
    <ligand>
        <name>S-adenosyl-L-methionine</name>
        <dbReference type="ChEBI" id="CHEBI:59789"/>
    </ligand>
</feature>
<gene>
    <name evidence="1" type="primary">ubiE</name>
    <name type="ordered locus">Z5355</name>
    <name type="ordered locus">ECs4763</name>
</gene>
<keyword id="KW-0474">Menaquinone biosynthesis</keyword>
<keyword id="KW-0489">Methyltransferase</keyword>
<keyword id="KW-1185">Reference proteome</keyword>
<keyword id="KW-0949">S-adenosyl-L-methionine</keyword>
<keyword id="KW-0808">Transferase</keyword>
<keyword id="KW-0831">Ubiquinone biosynthesis</keyword>
<reference key="1">
    <citation type="journal article" date="2001" name="Nature">
        <title>Genome sequence of enterohaemorrhagic Escherichia coli O157:H7.</title>
        <authorList>
            <person name="Perna N.T."/>
            <person name="Plunkett G. III"/>
            <person name="Burland V."/>
            <person name="Mau B."/>
            <person name="Glasner J.D."/>
            <person name="Rose D.J."/>
            <person name="Mayhew G.F."/>
            <person name="Evans P.S."/>
            <person name="Gregor J."/>
            <person name="Kirkpatrick H.A."/>
            <person name="Posfai G."/>
            <person name="Hackett J."/>
            <person name="Klink S."/>
            <person name="Boutin A."/>
            <person name="Shao Y."/>
            <person name="Miller L."/>
            <person name="Grotbeck E.J."/>
            <person name="Davis N.W."/>
            <person name="Lim A."/>
            <person name="Dimalanta E.T."/>
            <person name="Potamousis K."/>
            <person name="Apodaca J."/>
            <person name="Anantharaman T.S."/>
            <person name="Lin J."/>
            <person name="Yen G."/>
            <person name="Schwartz D.C."/>
            <person name="Welch R.A."/>
            <person name="Blattner F.R."/>
        </authorList>
    </citation>
    <scope>NUCLEOTIDE SEQUENCE [LARGE SCALE GENOMIC DNA]</scope>
    <source>
        <strain>O157:H7 / EDL933 / ATCC 700927 / EHEC</strain>
    </source>
</reference>
<reference key="2">
    <citation type="journal article" date="2001" name="DNA Res.">
        <title>Complete genome sequence of enterohemorrhagic Escherichia coli O157:H7 and genomic comparison with a laboratory strain K-12.</title>
        <authorList>
            <person name="Hayashi T."/>
            <person name="Makino K."/>
            <person name="Ohnishi M."/>
            <person name="Kurokawa K."/>
            <person name="Ishii K."/>
            <person name="Yokoyama K."/>
            <person name="Han C.-G."/>
            <person name="Ohtsubo E."/>
            <person name="Nakayama K."/>
            <person name="Murata T."/>
            <person name="Tanaka M."/>
            <person name="Tobe T."/>
            <person name="Iida T."/>
            <person name="Takami H."/>
            <person name="Honda T."/>
            <person name="Sasakawa C."/>
            <person name="Ogasawara N."/>
            <person name="Yasunaga T."/>
            <person name="Kuhara S."/>
            <person name="Shiba T."/>
            <person name="Hattori M."/>
            <person name="Shinagawa H."/>
        </authorList>
    </citation>
    <scope>NUCLEOTIDE SEQUENCE [LARGE SCALE GENOMIC DNA]</scope>
    <source>
        <strain>O157:H7 / Sakai / RIMD 0509952 / EHEC</strain>
    </source>
</reference>
<proteinExistence type="inferred from homology"/>
<comment type="function">
    <text evidence="1">Methyltransferase required for the conversion of demethylmenaquinol (DMKH2) to menaquinol (MKH2) and the conversion of 2-polyprenyl-6-methoxy-1,4-benzoquinol (DDMQH2) to 2-polyprenyl-3-methyl-6-methoxy-1,4-benzoquinol (DMQH2).</text>
</comment>
<comment type="catalytic activity">
    <reaction evidence="1">
        <text>a 2-demethylmenaquinol + S-adenosyl-L-methionine = a menaquinol + S-adenosyl-L-homocysteine + H(+)</text>
        <dbReference type="Rhea" id="RHEA:42640"/>
        <dbReference type="Rhea" id="RHEA-COMP:9539"/>
        <dbReference type="Rhea" id="RHEA-COMP:9563"/>
        <dbReference type="ChEBI" id="CHEBI:15378"/>
        <dbReference type="ChEBI" id="CHEBI:18151"/>
        <dbReference type="ChEBI" id="CHEBI:55437"/>
        <dbReference type="ChEBI" id="CHEBI:57856"/>
        <dbReference type="ChEBI" id="CHEBI:59789"/>
        <dbReference type="EC" id="2.1.1.163"/>
    </reaction>
</comment>
<comment type="catalytic activity">
    <reaction evidence="1">
        <text>a 2-methoxy-6-(all-trans-polyprenyl)benzene-1,4-diol + S-adenosyl-L-methionine = a 5-methoxy-2-methyl-3-(all-trans-polyprenyl)benzene-1,4-diol + S-adenosyl-L-homocysteine + H(+)</text>
        <dbReference type="Rhea" id="RHEA:28286"/>
        <dbReference type="Rhea" id="RHEA-COMP:10858"/>
        <dbReference type="Rhea" id="RHEA-COMP:10859"/>
        <dbReference type="ChEBI" id="CHEBI:15378"/>
        <dbReference type="ChEBI" id="CHEBI:57856"/>
        <dbReference type="ChEBI" id="CHEBI:59789"/>
        <dbReference type="ChEBI" id="CHEBI:84166"/>
        <dbReference type="ChEBI" id="CHEBI:84167"/>
        <dbReference type="EC" id="2.1.1.201"/>
    </reaction>
</comment>
<comment type="pathway">
    <text evidence="1">Quinol/quinone metabolism; menaquinone biosynthesis; menaquinol from 1,4-dihydroxy-2-naphthoate: step 2/2.</text>
</comment>
<comment type="pathway">
    <text evidence="1">Cofactor biosynthesis; ubiquinone biosynthesis.</text>
</comment>
<comment type="similarity">
    <text evidence="1">Belongs to the class I-like SAM-binding methyltransferase superfamily. MenG/UbiE family.</text>
</comment>
<organism>
    <name type="scientific">Escherichia coli O157:H7</name>
    <dbReference type="NCBI Taxonomy" id="83334"/>
    <lineage>
        <taxon>Bacteria</taxon>
        <taxon>Pseudomonadati</taxon>
        <taxon>Pseudomonadota</taxon>
        <taxon>Gammaproteobacteria</taxon>
        <taxon>Enterobacterales</taxon>
        <taxon>Enterobacteriaceae</taxon>
        <taxon>Escherichia</taxon>
    </lineage>
</organism>